<sequence length="228" mass="25843">MIKLVLVDLDGTLTEDRESTRIDLDAIYAIRLLQKSGIKVSLVSGNSYPILRGLYTYLYLDGGFVAENGCIVFYKEKYRMCRQMEQSLVDEFKSLFKLRDTWQNEYRECDFGFVPAKITDEMINWAKERNLYIKSSGYAVHIAYNPAGKRIGVEKLLQLLGLKKEDVAAIGDSSTDIELFQQVGFKVAVGNADDELKDIADYITSNKSGKGVREFVDKLLKGEFDGIK</sequence>
<gene>
    <name type="ordered locus">SSO0094</name>
    <name type="ORF">C04028</name>
</gene>
<feature type="chain" id="PRO_0000146728" description="Phosphoglycolate phosphatase 1">
    <location>
        <begin position="1"/>
        <end position="228"/>
    </location>
</feature>
<feature type="active site" description="Nucleophile" evidence="1">
    <location>
        <position position="8"/>
    </location>
</feature>
<feature type="binding site" evidence="1">
    <location>
        <position position="8"/>
    </location>
    <ligand>
        <name>Mg(2+)</name>
        <dbReference type="ChEBI" id="CHEBI:18420"/>
    </ligand>
</feature>
<feature type="binding site" evidence="1">
    <location>
        <position position="10"/>
    </location>
    <ligand>
        <name>Mg(2+)</name>
        <dbReference type="ChEBI" id="CHEBI:18420"/>
    </ligand>
</feature>
<feature type="binding site" evidence="1">
    <location>
        <position position="149"/>
    </location>
    <ligand>
        <name>substrate</name>
    </ligand>
</feature>
<feature type="binding site" evidence="1">
    <location>
        <position position="172"/>
    </location>
    <ligand>
        <name>Mg(2+)</name>
        <dbReference type="ChEBI" id="CHEBI:18420"/>
    </ligand>
</feature>
<feature type="binding site" evidence="1">
    <location>
        <position position="176"/>
    </location>
    <ligand>
        <name>Mg(2+)</name>
        <dbReference type="ChEBI" id="CHEBI:18420"/>
    </ligand>
</feature>
<organism>
    <name type="scientific">Saccharolobus solfataricus (strain ATCC 35092 / DSM 1617 / JCM 11322 / P2)</name>
    <name type="common">Sulfolobus solfataricus</name>
    <dbReference type="NCBI Taxonomy" id="273057"/>
    <lineage>
        <taxon>Archaea</taxon>
        <taxon>Thermoproteota</taxon>
        <taxon>Thermoprotei</taxon>
        <taxon>Sulfolobales</taxon>
        <taxon>Sulfolobaceae</taxon>
        <taxon>Saccharolobus</taxon>
    </lineage>
</organism>
<reference key="1">
    <citation type="journal article" date="1996" name="Mol. Microbiol.">
        <title>Organizational characteristics and information content of an archaeal genome: 156 kb of sequence from Sulfolobus solfataricus P2.</title>
        <authorList>
            <person name="Sensen C.W."/>
            <person name="Klenk H.-P."/>
            <person name="Singh R.K."/>
            <person name="Allard G."/>
            <person name="Chan C.C.-Y."/>
            <person name="Liu Q.Y."/>
            <person name="Penny S.L."/>
            <person name="Young F."/>
            <person name="Schenk M.E."/>
            <person name="Gaasterland T."/>
            <person name="Doolittle W.F."/>
            <person name="Ragan M.A."/>
            <person name="Charlebois R.L."/>
        </authorList>
    </citation>
    <scope>NUCLEOTIDE SEQUENCE [GENOMIC DNA]</scope>
    <source>
        <strain>ATCC 35092 / DSM 1617 / JCM 11322 / P2</strain>
    </source>
</reference>
<reference key="2">
    <citation type="journal article" date="2001" name="Proc. Natl. Acad. Sci. U.S.A.">
        <title>The complete genome of the crenarchaeon Sulfolobus solfataricus P2.</title>
        <authorList>
            <person name="She Q."/>
            <person name="Singh R.K."/>
            <person name="Confalonieri F."/>
            <person name="Zivanovic Y."/>
            <person name="Allard G."/>
            <person name="Awayez M.J."/>
            <person name="Chan-Weiher C.C.-Y."/>
            <person name="Clausen I.G."/>
            <person name="Curtis B.A."/>
            <person name="De Moors A."/>
            <person name="Erauso G."/>
            <person name="Fletcher C."/>
            <person name="Gordon P.M.K."/>
            <person name="Heikamp-de Jong I."/>
            <person name="Jeffries A.C."/>
            <person name="Kozera C.J."/>
            <person name="Medina N."/>
            <person name="Peng X."/>
            <person name="Thi-Ngoc H.P."/>
            <person name="Redder P."/>
            <person name="Schenk M.E."/>
            <person name="Theriault C."/>
            <person name="Tolstrup N."/>
            <person name="Charlebois R.L."/>
            <person name="Doolittle W.F."/>
            <person name="Duguet M."/>
            <person name="Gaasterland T."/>
            <person name="Garrett R.A."/>
            <person name="Ragan M.A."/>
            <person name="Sensen C.W."/>
            <person name="Van der Oost J."/>
        </authorList>
    </citation>
    <scope>NUCLEOTIDE SEQUENCE [LARGE SCALE GENOMIC DNA]</scope>
    <source>
        <strain>ATCC 35092 / DSM 1617 / JCM 11322 / P2</strain>
    </source>
</reference>
<accession>P95967</accession>
<name>PGP1_SACS2</name>
<keyword id="KW-0119">Carbohydrate metabolism</keyword>
<keyword id="KW-0378">Hydrolase</keyword>
<keyword id="KW-0460">Magnesium</keyword>
<keyword id="KW-0479">Metal-binding</keyword>
<keyword id="KW-1185">Reference proteome</keyword>
<dbReference type="EC" id="3.1.3.18"/>
<dbReference type="EMBL" id="Y08257">
    <property type="protein sequence ID" value="CAA69557.1"/>
    <property type="molecule type" value="Genomic_DNA"/>
</dbReference>
<dbReference type="EMBL" id="AE006641">
    <property type="protein sequence ID" value="AAK40451.1"/>
    <property type="molecule type" value="Genomic_DNA"/>
</dbReference>
<dbReference type="PIR" id="S75394">
    <property type="entry name" value="S75394"/>
</dbReference>
<dbReference type="RefSeq" id="WP_009988906.1">
    <property type="nucleotide sequence ID" value="NC_002754.1"/>
</dbReference>
<dbReference type="SMR" id="P95967"/>
<dbReference type="FunCoup" id="P95967">
    <property type="interactions" value="43"/>
</dbReference>
<dbReference type="STRING" id="273057.SSO0094"/>
<dbReference type="PaxDb" id="273057-SSO0094"/>
<dbReference type="EnsemblBacteria" id="AAK40451">
    <property type="protein sequence ID" value="AAK40451"/>
    <property type="gene ID" value="SSO0094"/>
</dbReference>
<dbReference type="KEGG" id="sso:SSO0094"/>
<dbReference type="PATRIC" id="fig|273057.12.peg.91"/>
<dbReference type="eggNOG" id="arCOG01213">
    <property type="taxonomic scope" value="Archaea"/>
</dbReference>
<dbReference type="HOGENOM" id="CLU_044146_2_0_2"/>
<dbReference type="InParanoid" id="P95967"/>
<dbReference type="PhylomeDB" id="P95967"/>
<dbReference type="Proteomes" id="UP000001974">
    <property type="component" value="Chromosome"/>
</dbReference>
<dbReference type="GO" id="GO:0005829">
    <property type="term" value="C:cytosol"/>
    <property type="evidence" value="ECO:0000318"/>
    <property type="project" value="GO_Central"/>
</dbReference>
<dbReference type="GO" id="GO:0000287">
    <property type="term" value="F:magnesium ion binding"/>
    <property type="evidence" value="ECO:0000318"/>
    <property type="project" value="GO_Central"/>
</dbReference>
<dbReference type="GO" id="GO:0016791">
    <property type="term" value="F:phosphatase activity"/>
    <property type="evidence" value="ECO:0000318"/>
    <property type="project" value="GO_Central"/>
</dbReference>
<dbReference type="GO" id="GO:0008967">
    <property type="term" value="F:phosphoglycolate phosphatase activity"/>
    <property type="evidence" value="ECO:0007669"/>
    <property type="project" value="UniProtKB-UniRule"/>
</dbReference>
<dbReference type="CDD" id="cd07514">
    <property type="entry name" value="HAD_Pase"/>
    <property type="match status" value="1"/>
</dbReference>
<dbReference type="Gene3D" id="3.90.1070.10">
    <property type="match status" value="1"/>
</dbReference>
<dbReference type="Gene3D" id="3.40.50.1000">
    <property type="entry name" value="HAD superfamily/HAD-like"/>
    <property type="match status" value="1"/>
</dbReference>
<dbReference type="HAMAP" id="MF_01419">
    <property type="entry name" value="GPH_hydrolase_arch"/>
    <property type="match status" value="1"/>
</dbReference>
<dbReference type="InterPro" id="IPR036412">
    <property type="entry name" value="HAD-like_sf"/>
</dbReference>
<dbReference type="InterPro" id="IPR023214">
    <property type="entry name" value="HAD_sf"/>
</dbReference>
<dbReference type="InterPro" id="IPR006382">
    <property type="entry name" value="PGPase"/>
</dbReference>
<dbReference type="NCBIfam" id="TIGR01487">
    <property type="entry name" value="Pglycolate_arch"/>
    <property type="match status" value="1"/>
</dbReference>
<dbReference type="NCBIfam" id="TIGR01482">
    <property type="entry name" value="SPP-subfamily"/>
    <property type="match status" value="1"/>
</dbReference>
<dbReference type="PANTHER" id="PTHR10000:SF8">
    <property type="entry name" value="HAD SUPERFAMILY HYDROLASE-LIKE, TYPE 3"/>
    <property type="match status" value="1"/>
</dbReference>
<dbReference type="PANTHER" id="PTHR10000">
    <property type="entry name" value="PHOSPHOSERINE PHOSPHATASE"/>
    <property type="match status" value="1"/>
</dbReference>
<dbReference type="Pfam" id="PF08282">
    <property type="entry name" value="Hydrolase_3"/>
    <property type="match status" value="2"/>
</dbReference>
<dbReference type="SFLD" id="SFLDS00003">
    <property type="entry name" value="Haloacid_Dehalogenase"/>
    <property type="match status" value="1"/>
</dbReference>
<dbReference type="SFLD" id="SFLDF00446">
    <property type="entry name" value="phosphoglycolate_phosphatase_3"/>
    <property type="match status" value="1"/>
</dbReference>
<dbReference type="SUPFAM" id="SSF56784">
    <property type="entry name" value="HAD-like"/>
    <property type="match status" value="1"/>
</dbReference>
<evidence type="ECO:0000250" key="1"/>
<evidence type="ECO:0000305" key="2"/>
<comment type="function">
    <text evidence="1">Catalyzes the dephosphorylation of 2-phosphoglycolate.</text>
</comment>
<comment type="catalytic activity">
    <reaction>
        <text>2-phosphoglycolate + H2O = glycolate + phosphate</text>
        <dbReference type="Rhea" id="RHEA:14369"/>
        <dbReference type="ChEBI" id="CHEBI:15377"/>
        <dbReference type="ChEBI" id="CHEBI:29805"/>
        <dbReference type="ChEBI" id="CHEBI:43474"/>
        <dbReference type="ChEBI" id="CHEBI:58033"/>
        <dbReference type="EC" id="3.1.3.18"/>
    </reaction>
</comment>
<comment type="cofactor">
    <cofactor evidence="1">
        <name>Mg(2+)</name>
        <dbReference type="ChEBI" id="CHEBI:18420"/>
    </cofactor>
</comment>
<comment type="similarity">
    <text evidence="2">Belongs to the archaeal SPP-like hydrolase family.</text>
</comment>
<protein>
    <recommendedName>
        <fullName>Phosphoglycolate phosphatase 1</fullName>
        <shortName>PGP 1</shortName>
        <shortName>PGPase 1</shortName>
        <ecNumber>3.1.3.18</ecNumber>
    </recommendedName>
</protein>
<proteinExistence type="inferred from homology"/>